<proteinExistence type="inferred from homology"/>
<accession>P47290</accession>
<dbReference type="EMBL" id="L43967">
    <property type="protein sequence ID" value="AAC71260.1"/>
    <property type="molecule type" value="Genomic_DNA"/>
</dbReference>
<dbReference type="PIR" id="H64204">
    <property type="entry name" value="H64204"/>
</dbReference>
<dbReference type="RefSeq" id="WP_009885706.1">
    <property type="nucleotide sequence ID" value="NC_000908.2"/>
</dbReference>
<dbReference type="SMR" id="P47290"/>
<dbReference type="STRING" id="243273.MG_044"/>
<dbReference type="GeneID" id="88282159"/>
<dbReference type="KEGG" id="mge:MG_044"/>
<dbReference type="eggNOG" id="COG1177">
    <property type="taxonomic scope" value="Bacteria"/>
</dbReference>
<dbReference type="HOGENOM" id="CLU_016047_3_0_14"/>
<dbReference type="InParanoid" id="P47290"/>
<dbReference type="OrthoDB" id="9782004at2"/>
<dbReference type="BioCyc" id="MGEN243273:G1GJ2-44-MONOMER"/>
<dbReference type="Proteomes" id="UP000000807">
    <property type="component" value="Chromosome"/>
</dbReference>
<dbReference type="GO" id="GO:0005886">
    <property type="term" value="C:plasma membrane"/>
    <property type="evidence" value="ECO:0007669"/>
    <property type="project" value="UniProtKB-SubCell"/>
</dbReference>
<dbReference type="GO" id="GO:0055085">
    <property type="term" value="P:transmembrane transport"/>
    <property type="evidence" value="ECO:0007669"/>
    <property type="project" value="InterPro"/>
</dbReference>
<dbReference type="CDD" id="cd06261">
    <property type="entry name" value="TM_PBP2"/>
    <property type="match status" value="1"/>
</dbReference>
<dbReference type="Gene3D" id="1.10.3720.10">
    <property type="entry name" value="MetI-like"/>
    <property type="match status" value="1"/>
</dbReference>
<dbReference type="InterPro" id="IPR051789">
    <property type="entry name" value="Bact_Polyamine_Transport"/>
</dbReference>
<dbReference type="InterPro" id="IPR000515">
    <property type="entry name" value="MetI-like"/>
</dbReference>
<dbReference type="InterPro" id="IPR035906">
    <property type="entry name" value="MetI-like_sf"/>
</dbReference>
<dbReference type="PANTHER" id="PTHR43848">
    <property type="entry name" value="PUTRESCINE TRANSPORT SYSTEM PERMEASE PROTEIN POTI"/>
    <property type="match status" value="1"/>
</dbReference>
<dbReference type="PANTHER" id="PTHR43848:SF2">
    <property type="entry name" value="PUTRESCINE TRANSPORT SYSTEM PERMEASE PROTEIN POTI"/>
    <property type="match status" value="1"/>
</dbReference>
<dbReference type="Pfam" id="PF00528">
    <property type="entry name" value="BPD_transp_1"/>
    <property type="match status" value="1"/>
</dbReference>
<dbReference type="SUPFAM" id="SSF161098">
    <property type="entry name" value="MetI-like"/>
    <property type="match status" value="1"/>
</dbReference>
<dbReference type="PROSITE" id="PS50928">
    <property type="entry name" value="ABC_TM1"/>
    <property type="match status" value="1"/>
</dbReference>
<comment type="function">
    <text evidence="1">Required for the activity of the bacterial transport system of putrescine and spermidine.</text>
</comment>
<comment type="subcellular location">
    <subcellularLocation>
        <location evidence="1">Cell membrane</location>
        <topology evidence="2">Multi-pass membrane protein</topology>
    </subcellularLocation>
</comment>
<comment type="similarity">
    <text evidence="3">Belongs to the binding-protein-dependent transport system permease family. CysTW subfamily.</text>
</comment>
<feature type="chain" id="PRO_0000060185" description="Spermidine/putrescine transport system permease protein PotC homolog">
    <location>
        <begin position="1"/>
        <end position="284"/>
    </location>
</feature>
<feature type="transmembrane region" description="Helical" evidence="2">
    <location>
        <begin position="13"/>
        <end position="33"/>
    </location>
</feature>
<feature type="transmembrane region" description="Helical" evidence="2">
    <location>
        <begin position="76"/>
        <end position="96"/>
    </location>
</feature>
<feature type="transmembrane region" description="Helical" evidence="2">
    <location>
        <begin position="116"/>
        <end position="136"/>
    </location>
</feature>
<feature type="transmembrane region" description="Helical" evidence="2">
    <location>
        <begin position="143"/>
        <end position="163"/>
    </location>
</feature>
<feature type="transmembrane region" description="Helical" evidence="2">
    <location>
        <begin position="189"/>
        <end position="209"/>
    </location>
</feature>
<feature type="transmembrane region" description="Helical" evidence="2">
    <location>
        <begin position="242"/>
        <end position="262"/>
    </location>
</feature>
<feature type="domain" description="ABC transmembrane type-1" evidence="2">
    <location>
        <begin position="72"/>
        <end position="263"/>
    </location>
</feature>
<evidence type="ECO:0000250" key="1"/>
<evidence type="ECO:0000255" key="2">
    <source>
        <dbReference type="PROSITE-ProRule" id="PRU00441"/>
    </source>
</evidence>
<evidence type="ECO:0000305" key="3"/>
<protein>
    <recommendedName>
        <fullName>Spermidine/putrescine transport system permease protein PotC homolog</fullName>
    </recommendedName>
</protein>
<gene>
    <name type="primary">potC</name>
    <name type="ordered locus">MG044</name>
</gene>
<keyword id="KW-1003">Cell membrane</keyword>
<keyword id="KW-0472">Membrane</keyword>
<keyword id="KW-1185">Reference proteome</keyword>
<keyword id="KW-0812">Transmembrane</keyword>
<keyword id="KW-1133">Transmembrane helix</keyword>
<keyword id="KW-0813">Transport</keyword>
<sequence length="284" mass="31669">MKKHFKNLIKNSYFFLLITLIYLPLLIVVLVSLNGSSSRGNIVLDFGNVLNPNPDSKSAYLRLGETDFATPLINSIIIGVITVLVSVPIAVISAFALLRTRNALKKTIFGITNFSLATPDIITAISLVLLFANTWLSFNQQLGFFTIITSHISFSVPYALILIYPKIQKLNPNLILASQDLGYSPLKTFFHITLPYLMPSIFSAVLVVFATSFDDYVITSLVQGSVKTIATELYSFRKGIKAWAIAFGSILILISVLGVCLITLQKYLREKRKEIIKIRQWKNS</sequence>
<name>POTC_MYCGE</name>
<reference key="1">
    <citation type="journal article" date="1995" name="Science">
        <title>The minimal gene complement of Mycoplasma genitalium.</title>
        <authorList>
            <person name="Fraser C.M."/>
            <person name="Gocayne J.D."/>
            <person name="White O."/>
            <person name="Adams M.D."/>
            <person name="Clayton R.A."/>
            <person name="Fleischmann R.D."/>
            <person name="Bult C.J."/>
            <person name="Kerlavage A.R."/>
            <person name="Sutton G.G."/>
            <person name="Kelley J.M."/>
            <person name="Fritchman J.L."/>
            <person name="Weidman J.F."/>
            <person name="Small K.V."/>
            <person name="Sandusky M."/>
            <person name="Fuhrmann J.L."/>
            <person name="Nguyen D.T."/>
            <person name="Utterback T.R."/>
            <person name="Saudek D.M."/>
            <person name="Phillips C.A."/>
            <person name="Merrick J.M."/>
            <person name="Tomb J.-F."/>
            <person name="Dougherty B.A."/>
            <person name="Bott K.F."/>
            <person name="Hu P.-C."/>
            <person name="Lucier T.S."/>
            <person name="Peterson S.N."/>
            <person name="Smith H.O."/>
            <person name="Hutchison C.A. III"/>
            <person name="Venter J.C."/>
        </authorList>
    </citation>
    <scope>NUCLEOTIDE SEQUENCE [LARGE SCALE GENOMIC DNA]</scope>
    <source>
        <strain>ATCC 33530 / DSM 19775 / NCTC 10195 / G37</strain>
    </source>
</reference>
<organism>
    <name type="scientific">Mycoplasma genitalium (strain ATCC 33530 / DSM 19775 / NCTC 10195 / G37)</name>
    <name type="common">Mycoplasmoides genitalium</name>
    <dbReference type="NCBI Taxonomy" id="243273"/>
    <lineage>
        <taxon>Bacteria</taxon>
        <taxon>Bacillati</taxon>
        <taxon>Mycoplasmatota</taxon>
        <taxon>Mycoplasmoidales</taxon>
        <taxon>Mycoplasmoidaceae</taxon>
        <taxon>Mycoplasmoides</taxon>
    </lineage>
</organism>